<evidence type="ECO:0000250" key="1"/>
<evidence type="ECO:0000255" key="2"/>
<evidence type="ECO:0000305" key="3"/>
<geneLocation type="mitochondrion"/>
<protein>
    <recommendedName>
        <fullName>NADH-ubiquinone oxidoreductase chain 2</fullName>
        <ecNumber>7.1.1.2</ecNumber>
    </recommendedName>
    <alternativeName>
        <fullName>NADH dehydrogenase subunit 2</fullName>
    </alternativeName>
</protein>
<name>NU2M_BRALA</name>
<comment type="function">
    <text evidence="1">Core subunit of the mitochondrial membrane respiratory chain NADH dehydrogenase (Complex I) that is believed to belong to the minimal assembly required for catalysis. Complex I functions in the transfer of electrons from NADH to the respiratory chain. The immediate electron acceptor for the enzyme is believed to be ubiquinone (By similarity).</text>
</comment>
<comment type="catalytic activity">
    <reaction>
        <text>a ubiquinone + NADH + 5 H(+)(in) = a ubiquinol + NAD(+) + 4 H(+)(out)</text>
        <dbReference type="Rhea" id="RHEA:29091"/>
        <dbReference type="Rhea" id="RHEA-COMP:9565"/>
        <dbReference type="Rhea" id="RHEA-COMP:9566"/>
        <dbReference type="ChEBI" id="CHEBI:15378"/>
        <dbReference type="ChEBI" id="CHEBI:16389"/>
        <dbReference type="ChEBI" id="CHEBI:17976"/>
        <dbReference type="ChEBI" id="CHEBI:57540"/>
        <dbReference type="ChEBI" id="CHEBI:57945"/>
        <dbReference type="EC" id="7.1.1.2"/>
    </reaction>
</comment>
<comment type="subcellular location">
    <subcellularLocation>
        <location>Mitochondrion inner membrane</location>
        <topology>Multi-pass membrane protein</topology>
    </subcellularLocation>
</comment>
<comment type="similarity">
    <text evidence="3">Belongs to the complex I subunit 2 family.</text>
</comment>
<organism>
    <name type="scientific">Branchiostoma lanceolatum</name>
    <name type="common">Common lancelet</name>
    <name type="synonym">Amphioxus lanceolatum</name>
    <dbReference type="NCBI Taxonomy" id="7740"/>
    <lineage>
        <taxon>Eukaryota</taxon>
        <taxon>Metazoa</taxon>
        <taxon>Chordata</taxon>
        <taxon>Cephalochordata</taxon>
        <taxon>Leptocardii</taxon>
        <taxon>Amphioxiformes</taxon>
        <taxon>Branchiostomatidae</taxon>
        <taxon>Branchiostoma</taxon>
    </lineage>
</organism>
<gene>
    <name type="primary">ND2</name>
    <name type="synonym">NAD2</name>
    <name type="synonym">NADH2</name>
</gene>
<reference key="1">
    <citation type="journal article" date="1997" name="Mol. Biol. Evol.">
        <title>The main features of the craniate mitochondrial DNA between the ND1 and the COI genes were established in the common ancestor with the lancelet.</title>
        <authorList>
            <person name="Delarbre C."/>
            <person name="Barriel V."/>
            <person name="Tillier S."/>
            <person name="Janvier P."/>
            <person name="Gachelin G."/>
        </authorList>
    </citation>
    <scope>NUCLEOTIDE SEQUENCE [GENOMIC DNA]</scope>
</reference>
<reference key="2">
    <citation type="journal article" date="1998" name="Nucleic Acids Res.">
        <title>Complete sequence of the amphioxus (Branchiostoma lanceolatum) mitochondrial genome: relations to vertebrates.</title>
        <authorList>
            <person name="Spruyt N."/>
            <person name="Delarbre C."/>
            <person name="Gachelin G."/>
            <person name="Laudet V."/>
        </authorList>
    </citation>
    <scope>NUCLEOTIDE SEQUENCE [GENOMIC DNA]</scope>
</reference>
<proteinExistence type="inferred from homology"/>
<accession>O21001</accession>
<accession>O79416</accession>
<sequence length="346" mass="37371">MSPYISPLFSITMIMSVMLISSSGHWVFMWLGLELGTLAFIPILVWWHSSLEVEATVKYFIVQAMAAAVFFLGGMVSLSGDFMGGVNQLMGNIGDMMIMLAVVTKLGLAPFHYWVVDVVQGLNYIPGAVLLTWQKVPGLAVLTQLATCNNSSMLLLFGMVSALVGGLGGLGQTQMRKLLAFSSISHLGWLVVGCVAGSLLGLSYFTLYVILSIPLFSILHMLNGGHLNQLRTGLMFNPLMSVLLGVGFLSLGGLPPFFGFFGKWLLLTHFVGQLLLGVSVVLITGTLISLFYYLRVSYLCIVVLGPQQIMSGLNWRKMQLSGLMSGLLVLNMLGLFLVGGASCLPK</sequence>
<dbReference type="EC" id="7.1.1.2"/>
<dbReference type="EMBL" id="Y09524">
    <property type="protein sequence ID" value="CAA70709.1"/>
    <property type="molecule type" value="Genomic_DNA"/>
</dbReference>
<dbReference type="EMBL" id="Y16474">
    <property type="protein sequence ID" value="CAA76248.1"/>
    <property type="molecule type" value="Genomic_DNA"/>
</dbReference>
<dbReference type="PIR" id="C71390">
    <property type="entry name" value="C71390"/>
</dbReference>
<dbReference type="RefSeq" id="NP_007538.1">
    <property type="nucleotide sequence ID" value="NC_001912.1"/>
</dbReference>
<dbReference type="SMR" id="O21001"/>
<dbReference type="GeneID" id="808208"/>
<dbReference type="CTD" id="4536"/>
<dbReference type="GO" id="GO:0005743">
    <property type="term" value="C:mitochondrial inner membrane"/>
    <property type="evidence" value="ECO:0007669"/>
    <property type="project" value="UniProtKB-SubCell"/>
</dbReference>
<dbReference type="GO" id="GO:0008137">
    <property type="term" value="F:NADH dehydrogenase (ubiquinone) activity"/>
    <property type="evidence" value="ECO:0007669"/>
    <property type="project" value="UniProtKB-EC"/>
</dbReference>
<dbReference type="GO" id="GO:0006120">
    <property type="term" value="P:mitochondrial electron transport, NADH to ubiquinone"/>
    <property type="evidence" value="ECO:0007669"/>
    <property type="project" value="InterPro"/>
</dbReference>
<dbReference type="InterPro" id="IPR050175">
    <property type="entry name" value="Complex_I_Subunit_2"/>
</dbReference>
<dbReference type="InterPro" id="IPR003917">
    <property type="entry name" value="NADH_UbQ_OxRdtase_chain2"/>
</dbReference>
<dbReference type="InterPro" id="IPR001750">
    <property type="entry name" value="ND/Mrp_TM"/>
</dbReference>
<dbReference type="PANTHER" id="PTHR46552">
    <property type="entry name" value="NADH-UBIQUINONE OXIDOREDUCTASE CHAIN 2"/>
    <property type="match status" value="1"/>
</dbReference>
<dbReference type="PANTHER" id="PTHR46552:SF1">
    <property type="entry name" value="NADH-UBIQUINONE OXIDOREDUCTASE CHAIN 2"/>
    <property type="match status" value="1"/>
</dbReference>
<dbReference type="Pfam" id="PF00361">
    <property type="entry name" value="Proton_antipo_M"/>
    <property type="match status" value="1"/>
</dbReference>
<dbReference type="PRINTS" id="PR01436">
    <property type="entry name" value="NADHDHGNASE2"/>
</dbReference>
<keyword id="KW-0249">Electron transport</keyword>
<keyword id="KW-0472">Membrane</keyword>
<keyword id="KW-0496">Mitochondrion</keyword>
<keyword id="KW-0999">Mitochondrion inner membrane</keyword>
<keyword id="KW-0520">NAD</keyword>
<keyword id="KW-0679">Respiratory chain</keyword>
<keyword id="KW-1278">Translocase</keyword>
<keyword id="KW-0812">Transmembrane</keyword>
<keyword id="KW-1133">Transmembrane helix</keyword>
<keyword id="KW-0813">Transport</keyword>
<keyword id="KW-0830">Ubiquinone</keyword>
<feature type="chain" id="PRO_0000117561" description="NADH-ubiquinone oxidoreductase chain 2">
    <location>
        <begin position="1"/>
        <end position="346"/>
    </location>
</feature>
<feature type="transmembrane region" description="Helical" evidence="2">
    <location>
        <begin position="1"/>
        <end position="21"/>
    </location>
</feature>
<feature type="transmembrane region" description="Helical" evidence="2">
    <location>
        <begin position="26"/>
        <end position="46"/>
    </location>
</feature>
<feature type="transmembrane region" description="Helical" evidence="2">
    <location>
        <begin position="60"/>
        <end position="80"/>
    </location>
</feature>
<feature type="transmembrane region" description="Helical" evidence="2">
    <location>
        <begin position="96"/>
        <end position="116"/>
    </location>
</feature>
<feature type="transmembrane region" description="Helical" evidence="2">
    <location>
        <begin position="122"/>
        <end position="142"/>
    </location>
</feature>
<feature type="transmembrane region" description="Helical" evidence="2">
    <location>
        <begin position="151"/>
        <end position="171"/>
    </location>
</feature>
<feature type="transmembrane region" description="Helical" evidence="2">
    <location>
        <begin position="178"/>
        <end position="198"/>
    </location>
</feature>
<feature type="transmembrane region" description="Helical" evidence="2">
    <location>
        <begin position="199"/>
        <end position="219"/>
    </location>
</feature>
<feature type="transmembrane region" description="Helical" evidence="2">
    <location>
        <begin position="242"/>
        <end position="262"/>
    </location>
</feature>
<feature type="transmembrane region" description="Helical" evidence="2">
    <location>
        <begin position="274"/>
        <end position="294"/>
    </location>
</feature>
<feature type="transmembrane region" description="Helical" evidence="2">
    <location>
        <begin position="320"/>
        <end position="340"/>
    </location>
</feature>
<feature type="sequence conflict" description="In Ref. 1; CAA70709." evidence="3" ref="1">
    <original>S</original>
    <variation>G</variation>
    <location>
        <position position="79"/>
    </location>
</feature>
<feature type="sequence conflict" description="In Ref. 1; CAA70709." evidence="3" ref="1">
    <original>N</original>
    <variation>H</variation>
    <location>
        <position position="92"/>
    </location>
</feature>
<feature type="sequence conflict" description="In Ref. 1; CAA70709." evidence="3" ref="1">
    <original>F</original>
    <variation>L</variation>
    <location>
        <position position="157"/>
    </location>
</feature>
<feature type="sequence conflict" description="In Ref. 1; CAA70709." evidence="3" ref="1">
    <original>V</original>
    <variation>A</variation>
    <location>
        <position position="191"/>
    </location>
</feature>
<feature type="sequence conflict" description="In Ref. 1; CAA70709." evidence="3" ref="1">
    <original>L</original>
    <variation>S</variation>
    <location>
        <position position="199"/>
    </location>
</feature>
<feature type="sequence conflict" description="In Ref. 1; CAA70709." evidence="3" ref="1">
    <original>I</original>
    <variation>V</variation>
    <location>
        <position position="210"/>
    </location>
</feature>
<feature type="sequence conflict" description="In Ref. 1; CAA70709." evidence="3" ref="1">
    <original>Q</original>
    <variation>H</variation>
    <location>
        <position position="229"/>
    </location>
</feature>